<reference key="1">
    <citation type="journal article" date="2003" name="Toxicon">
        <title>Molecular cloning and characterization of Phoneutria nigriventer toxins active on calcium channels.</title>
        <authorList>
            <person name="Cardoso F.C."/>
            <person name="Pacifico L.G."/>
            <person name="Carvalho D.C."/>
            <person name="Victoria J.M.N."/>
            <person name="Neves A.L.G."/>
            <person name="Chavez-Olortegui C."/>
            <person name="Gomez M.V."/>
            <person name="Kalapothakis E."/>
        </authorList>
    </citation>
    <scope>NUCLEOTIDE SEQUENCE [MRNA]</scope>
    <source>
        <tissue>Venom gland</tissue>
    </source>
</reference>
<dbReference type="SMR" id="P0C2S6"/>
<dbReference type="ArachnoServer" id="AS000260">
    <property type="toxin name" value="U9-ctenitoxin-Pn1a"/>
</dbReference>
<dbReference type="GO" id="GO:0005576">
    <property type="term" value="C:extracellular region"/>
    <property type="evidence" value="ECO:0007669"/>
    <property type="project" value="UniProtKB-SubCell"/>
</dbReference>
<dbReference type="GO" id="GO:0005246">
    <property type="term" value="F:calcium channel regulator activity"/>
    <property type="evidence" value="ECO:0007669"/>
    <property type="project" value="UniProtKB-KW"/>
</dbReference>
<dbReference type="GO" id="GO:0008200">
    <property type="term" value="F:ion channel inhibitor activity"/>
    <property type="evidence" value="ECO:0007669"/>
    <property type="project" value="InterPro"/>
</dbReference>
<dbReference type="GO" id="GO:0090729">
    <property type="term" value="F:toxin activity"/>
    <property type="evidence" value="ECO:0007669"/>
    <property type="project" value="UniProtKB-KW"/>
</dbReference>
<dbReference type="CDD" id="cd12960">
    <property type="entry name" value="Spider_toxin"/>
    <property type="match status" value="1"/>
</dbReference>
<dbReference type="InterPro" id="IPR004169">
    <property type="entry name" value="Spidertoxin"/>
</dbReference>
<dbReference type="Pfam" id="PF02819">
    <property type="entry name" value="Toxin_9"/>
    <property type="match status" value="1"/>
</dbReference>
<accession>P0C2S6</accession>
<sequence>MWLKTQLFVLAIAVIALLEVHAEPESNDNNELVVEEARGCADAYKSCNHPRTCCDGYNGYKRACICSGSNCKCKKSLREMAAAAFGR</sequence>
<name>TX21C_PHONI</name>
<keyword id="KW-0108">Calcium channel impairing toxin</keyword>
<keyword id="KW-1015">Disulfide bond</keyword>
<keyword id="KW-0872">Ion channel impairing toxin</keyword>
<keyword id="KW-0960">Knottin</keyword>
<keyword id="KW-0528">Neurotoxin</keyword>
<keyword id="KW-0964">Secreted</keyword>
<keyword id="KW-0732">Signal</keyword>
<keyword id="KW-0800">Toxin</keyword>
<keyword id="KW-1218">Voltage-gated calcium channel impairing toxin</keyword>
<feature type="signal peptide" evidence="3">
    <location>
        <begin position="1"/>
        <end position="22"/>
    </location>
</feature>
<feature type="propeptide" id="PRO_0000284871" evidence="1">
    <location>
        <begin position="23"/>
        <end position="37"/>
    </location>
</feature>
<feature type="chain" id="PRO_0000284872" description="U9-ctenitoxin-Pn1a">
    <location>
        <begin position="39"/>
        <end position="74"/>
    </location>
</feature>
<feature type="propeptide" id="PRO_0000284873" evidence="1">
    <location>
        <begin position="75"/>
        <end position="87"/>
    </location>
</feature>
<feature type="disulfide bond" evidence="2">
    <location>
        <begin position="40"/>
        <end position="54"/>
    </location>
</feature>
<feature type="disulfide bond" evidence="2">
    <location>
        <begin position="47"/>
        <end position="64"/>
    </location>
</feature>
<feature type="disulfide bond" evidence="2">
    <location>
        <begin position="53"/>
        <end position="73"/>
    </location>
</feature>
<feature type="disulfide bond" evidence="2">
    <location>
        <begin position="66"/>
        <end position="71"/>
    </location>
</feature>
<protein>
    <recommendedName>
        <fullName evidence="4">U9-ctenitoxin-Pn1a</fullName>
        <shortName evidence="4">U9-CNTX-Pn1a</shortName>
    </recommendedName>
    <alternativeName>
        <fullName>Neurotoxin Pn3-3A</fullName>
    </alternativeName>
</protein>
<organism>
    <name type="scientific">Phoneutria nigriventer</name>
    <name type="common">Brazilian armed spider</name>
    <name type="synonym">Ctenus nigriventer</name>
    <dbReference type="NCBI Taxonomy" id="6918"/>
    <lineage>
        <taxon>Eukaryota</taxon>
        <taxon>Metazoa</taxon>
        <taxon>Ecdysozoa</taxon>
        <taxon>Arthropoda</taxon>
        <taxon>Chelicerata</taxon>
        <taxon>Arachnida</taxon>
        <taxon>Araneae</taxon>
        <taxon>Araneomorphae</taxon>
        <taxon>Entelegynae</taxon>
        <taxon>Lycosoidea</taxon>
        <taxon>Ctenidae</taxon>
        <taxon>Phoneutria</taxon>
    </lineage>
</organism>
<proteinExistence type="inferred from homology"/>
<comment type="function">
    <text evidence="1">Antagonist of L-type calcium channels (Cav1/CACNA1).</text>
</comment>
<comment type="subcellular location">
    <subcellularLocation>
        <location evidence="5">Secreted</location>
    </subcellularLocation>
</comment>
<comment type="tissue specificity">
    <text evidence="5">Expressed by the venom gland.</text>
</comment>
<comment type="domain">
    <text evidence="2">The presence of a 'disulfide through disulfide knot' structurally defines this protein as a knottin.</text>
</comment>
<comment type="similarity">
    <text evidence="4">Belongs to the neurotoxin 02 (plectoxin) family. 01 (Tx3) subfamily.</text>
</comment>
<evidence type="ECO:0000250" key="1"/>
<evidence type="ECO:0000250" key="2">
    <source>
        <dbReference type="UniProtKB" id="P30288"/>
    </source>
</evidence>
<evidence type="ECO:0000255" key="3"/>
<evidence type="ECO:0000305" key="4"/>
<evidence type="ECO:0000305" key="5">
    <source>
    </source>
</evidence>